<reference key="1">
    <citation type="journal article" date="1985" name="Proc. Natl. Acad. Sci. U.S.A.">
        <title>Complete nucleotide sequence of the genome of bovine leukemia virus: its evolutionary relationship to other retroviruses.</title>
        <authorList>
            <person name="Sagata N."/>
            <person name="Yasunaga T."/>
            <person name="Tsuzuku-Kawamura J."/>
            <person name="Ohishi K."/>
            <person name="Ogawa Y."/>
            <person name="Ikawa Y."/>
        </authorList>
    </citation>
    <scope>NUCLEOTIDE SEQUENCE [GENOMIC RNA]</scope>
</reference>
<organismHost>
    <name type="scientific">Bos taurus</name>
    <name type="common">Bovine</name>
    <dbReference type="NCBI Taxonomy" id="9913"/>
</organismHost>
<feature type="chain" id="PRO_0000125506" description="Putative uncharacterized protein PXBL-I">
    <location>
        <begin position="1" status="less than"/>
        <end position="308"/>
    </location>
</feature>
<feature type="non-terminal residue">
    <location>
        <position position="1"/>
    </location>
</feature>
<accession>P03412</accession>
<proteinExistence type="predicted"/>
<organism>
    <name type="scientific">Bovine leukemia virus (isolate Japanese BLV-1)</name>
    <name type="common">BLV</name>
    <dbReference type="NCBI Taxonomy" id="11907"/>
    <lineage>
        <taxon>Viruses</taxon>
        <taxon>Riboviria</taxon>
        <taxon>Pararnavirae</taxon>
        <taxon>Artverviricota</taxon>
        <taxon>Revtraviricetes</taxon>
        <taxon>Ortervirales</taxon>
        <taxon>Retroviridae</taxon>
        <taxon>Orthoretrovirinae</taxon>
        <taxon>Deltaretrovirus</taxon>
        <taxon>Bovine leukemia virus</taxon>
    </lineage>
</organism>
<protein>
    <recommendedName>
        <fullName>Putative uncharacterized protein PXBL-I</fullName>
    </recommendedName>
</protein>
<sequence length="308" mass="34192">ASVVGWGPHSLHACPALVLSNDVTIDAWCPLCGPHERLQFERIDTTLTCETHRINWTADGRPCGLNGTLFPRLHVSETRPQGPRRLWINCPLPAVRAQPGPVSLSPFERSPFQPYQCQLPSASSDGCPIIGHGLLPWNNLVTHPVLGKVLILNQMANFSLLPSFDTLLVDPLRLSVFAPDTRGAIRYLSTLLTLCPATCILPLGEPFSPNVPICRFPRDSNEPPLSEFELPPIQTPGLSWSVPAIDLFLTGPPSPCDRLHVWSSPQALQRFLHDPTLTWSELVASRKIRLDSPLKLQLLENEWLSRLF</sequence>
<dbReference type="EMBL" id="K02120">
    <property type="status" value="NOT_ANNOTATED_CDS"/>
    <property type="molecule type" value="Genomic_RNA"/>
</dbReference>
<dbReference type="PIR" id="A04014">
    <property type="entry name" value="QQLJX1"/>
</dbReference>
<name>YPX1_BLVJ</name>